<keyword id="KW-0963">Cytoplasm</keyword>
<keyword id="KW-1185">Reference proteome</keyword>
<keyword id="KW-0694">RNA-binding</keyword>
<accession>Q62JE7</accession>
<reference key="1">
    <citation type="journal article" date="2004" name="Proc. Natl. Acad. Sci. U.S.A.">
        <title>Structural flexibility in the Burkholderia mallei genome.</title>
        <authorList>
            <person name="Nierman W.C."/>
            <person name="DeShazer D."/>
            <person name="Kim H.S."/>
            <person name="Tettelin H."/>
            <person name="Nelson K.E."/>
            <person name="Feldblyum T.V."/>
            <person name="Ulrich R.L."/>
            <person name="Ronning C.M."/>
            <person name="Brinkac L.M."/>
            <person name="Daugherty S.C."/>
            <person name="Davidsen T.D."/>
            <person name="DeBoy R.T."/>
            <person name="Dimitrov G."/>
            <person name="Dodson R.J."/>
            <person name="Durkin A.S."/>
            <person name="Gwinn M.L."/>
            <person name="Haft D.H."/>
            <person name="Khouri H.M."/>
            <person name="Kolonay J.F."/>
            <person name="Madupu R."/>
            <person name="Mohammoud Y."/>
            <person name="Nelson W.C."/>
            <person name="Radune D."/>
            <person name="Romero C.M."/>
            <person name="Sarria S."/>
            <person name="Selengut J."/>
            <person name="Shamblin C."/>
            <person name="Sullivan S.A."/>
            <person name="White O."/>
            <person name="Yu Y."/>
            <person name="Zafar N."/>
            <person name="Zhou L."/>
            <person name="Fraser C.M."/>
        </authorList>
    </citation>
    <scope>NUCLEOTIDE SEQUENCE [LARGE SCALE GENOMIC DNA]</scope>
    <source>
        <strain>ATCC 23344</strain>
    </source>
</reference>
<feature type="chain" id="PRO_0000102923" description="SsrA-binding protein">
    <location>
        <begin position="1"/>
        <end position="148"/>
    </location>
</feature>
<feature type="region of interest" description="Disordered" evidence="2">
    <location>
        <begin position="123"/>
        <end position="148"/>
    </location>
</feature>
<feature type="compositionally biased region" description="Basic and acidic residues" evidence="2">
    <location>
        <begin position="126"/>
        <end position="142"/>
    </location>
</feature>
<organism>
    <name type="scientific">Burkholderia mallei (strain ATCC 23344)</name>
    <dbReference type="NCBI Taxonomy" id="243160"/>
    <lineage>
        <taxon>Bacteria</taxon>
        <taxon>Pseudomonadati</taxon>
        <taxon>Pseudomonadota</taxon>
        <taxon>Betaproteobacteria</taxon>
        <taxon>Burkholderiales</taxon>
        <taxon>Burkholderiaceae</taxon>
        <taxon>Burkholderia</taxon>
        <taxon>pseudomallei group</taxon>
    </lineage>
</organism>
<sequence>MSIIDNRKAFFDYHIEERYEAGLVLEGWEVKALRAGRGQIKEGYVVVKHAEIFLIGTHISPLPEASTHIKPDPVRTRKLLLHRDEIKKLIGKVEQRGYTLVPLNFHYKGGRVKCEIGLAKGKKLHDKRETEKKRDWEREKARIMRSAT</sequence>
<dbReference type="EMBL" id="CP000010">
    <property type="protein sequence ID" value="AAU47732.1"/>
    <property type="molecule type" value="Genomic_DNA"/>
</dbReference>
<dbReference type="RefSeq" id="WP_004197080.1">
    <property type="nucleotide sequence ID" value="NC_006348.1"/>
</dbReference>
<dbReference type="RefSeq" id="YP_103172.1">
    <property type="nucleotide sequence ID" value="NC_006348.1"/>
</dbReference>
<dbReference type="SMR" id="Q62JE7"/>
<dbReference type="GeneID" id="93060677"/>
<dbReference type="KEGG" id="bma:BMA1532"/>
<dbReference type="PATRIC" id="fig|243160.12.peg.1575"/>
<dbReference type="eggNOG" id="COG0691">
    <property type="taxonomic scope" value="Bacteria"/>
</dbReference>
<dbReference type="HOGENOM" id="CLU_108953_3_0_4"/>
<dbReference type="Proteomes" id="UP000006693">
    <property type="component" value="Chromosome 1"/>
</dbReference>
<dbReference type="GO" id="GO:0005829">
    <property type="term" value="C:cytosol"/>
    <property type="evidence" value="ECO:0007669"/>
    <property type="project" value="TreeGrafter"/>
</dbReference>
<dbReference type="GO" id="GO:0003723">
    <property type="term" value="F:RNA binding"/>
    <property type="evidence" value="ECO:0007669"/>
    <property type="project" value="UniProtKB-UniRule"/>
</dbReference>
<dbReference type="GO" id="GO:0070929">
    <property type="term" value="P:trans-translation"/>
    <property type="evidence" value="ECO:0007669"/>
    <property type="project" value="UniProtKB-UniRule"/>
</dbReference>
<dbReference type="CDD" id="cd09294">
    <property type="entry name" value="SmpB"/>
    <property type="match status" value="1"/>
</dbReference>
<dbReference type="Gene3D" id="2.40.280.10">
    <property type="match status" value="1"/>
</dbReference>
<dbReference type="HAMAP" id="MF_00023">
    <property type="entry name" value="SmpB"/>
    <property type="match status" value="1"/>
</dbReference>
<dbReference type="InterPro" id="IPR023620">
    <property type="entry name" value="SmpB"/>
</dbReference>
<dbReference type="InterPro" id="IPR000037">
    <property type="entry name" value="SsrA-bd_prot"/>
</dbReference>
<dbReference type="InterPro" id="IPR020081">
    <property type="entry name" value="SsrA-bd_prot_CS"/>
</dbReference>
<dbReference type="NCBIfam" id="NF003843">
    <property type="entry name" value="PRK05422.1"/>
    <property type="match status" value="1"/>
</dbReference>
<dbReference type="NCBIfam" id="TIGR00086">
    <property type="entry name" value="smpB"/>
    <property type="match status" value="1"/>
</dbReference>
<dbReference type="PANTHER" id="PTHR30308:SF2">
    <property type="entry name" value="SSRA-BINDING PROTEIN"/>
    <property type="match status" value="1"/>
</dbReference>
<dbReference type="PANTHER" id="PTHR30308">
    <property type="entry name" value="TMRNA-BINDING COMPONENT OF TRANS-TRANSLATION TAGGING COMPLEX"/>
    <property type="match status" value="1"/>
</dbReference>
<dbReference type="Pfam" id="PF01668">
    <property type="entry name" value="SmpB"/>
    <property type="match status" value="1"/>
</dbReference>
<dbReference type="SUPFAM" id="SSF74982">
    <property type="entry name" value="Small protein B (SmpB)"/>
    <property type="match status" value="1"/>
</dbReference>
<dbReference type="PROSITE" id="PS01317">
    <property type="entry name" value="SSRP"/>
    <property type="match status" value="1"/>
</dbReference>
<comment type="function">
    <text evidence="1">Required for rescue of stalled ribosomes mediated by trans-translation. Binds to transfer-messenger RNA (tmRNA), required for stable association of tmRNA with ribosomes. tmRNA and SmpB together mimic tRNA shape, replacing the anticodon stem-loop with SmpB. tmRNA is encoded by the ssrA gene; the 2 termini fold to resemble tRNA(Ala) and it encodes a 'tag peptide', a short internal open reading frame. During trans-translation Ala-aminoacylated tmRNA acts like a tRNA, entering the A-site of stalled ribosomes, displacing the stalled mRNA. The ribosome then switches to translate the ORF on the tmRNA; the nascent peptide is terminated with the 'tag peptide' encoded by the tmRNA and targeted for degradation. The ribosome is freed to recommence translation, which seems to be the essential function of trans-translation.</text>
</comment>
<comment type="subcellular location">
    <subcellularLocation>
        <location evidence="1">Cytoplasm</location>
    </subcellularLocation>
    <text evidence="1">The tmRNA-SmpB complex associates with stalled 70S ribosomes.</text>
</comment>
<comment type="similarity">
    <text evidence="1">Belongs to the SmpB family.</text>
</comment>
<gene>
    <name evidence="1" type="primary">smpB</name>
    <name type="ordered locus">BMA1532</name>
</gene>
<evidence type="ECO:0000255" key="1">
    <source>
        <dbReference type="HAMAP-Rule" id="MF_00023"/>
    </source>
</evidence>
<evidence type="ECO:0000256" key="2">
    <source>
        <dbReference type="SAM" id="MobiDB-lite"/>
    </source>
</evidence>
<protein>
    <recommendedName>
        <fullName evidence="1">SsrA-binding protein</fullName>
    </recommendedName>
    <alternativeName>
        <fullName evidence="1">Small protein B</fullName>
    </alternativeName>
</protein>
<proteinExistence type="inferred from homology"/>
<name>SSRP_BURMA</name>